<accession>A4IMP7</accession>
<name>MSCL_GEOTN</name>
<evidence type="ECO:0000255" key="1">
    <source>
        <dbReference type="HAMAP-Rule" id="MF_00115"/>
    </source>
</evidence>
<dbReference type="EMBL" id="CP000557">
    <property type="protein sequence ID" value="ABO66601.1"/>
    <property type="molecule type" value="Genomic_DNA"/>
</dbReference>
<dbReference type="RefSeq" id="WP_011887221.1">
    <property type="nucleotide sequence ID" value="NC_009328.1"/>
</dbReference>
<dbReference type="SMR" id="A4IMP7"/>
<dbReference type="GeneID" id="87621183"/>
<dbReference type="KEGG" id="gtn:GTNG_1229"/>
<dbReference type="eggNOG" id="COG1970">
    <property type="taxonomic scope" value="Bacteria"/>
</dbReference>
<dbReference type="HOGENOM" id="CLU_095787_0_0_9"/>
<dbReference type="Proteomes" id="UP000001578">
    <property type="component" value="Chromosome"/>
</dbReference>
<dbReference type="GO" id="GO:0005886">
    <property type="term" value="C:plasma membrane"/>
    <property type="evidence" value="ECO:0007669"/>
    <property type="project" value="UniProtKB-SubCell"/>
</dbReference>
<dbReference type="GO" id="GO:0008381">
    <property type="term" value="F:mechanosensitive monoatomic ion channel activity"/>
    <property type="evidence" value="ECO:0007669"/>
    <property type="project" value="UniProtKB-UniRule"/>
</dbReference>
<dbReference type="FunFam" id="1.10.1200.120:FF:000001">
    <property type="entry name" value="Large-conductance mechanosensitive channel"/>
    <property type="match status" value="1"/>
</dbReference>
<dbReference type="Gene3D" id="1.10.1200.120">
    <property type="entry name" value="Large-conductance mechanosensitive channel, MscL, domain 1"/>
    <property type="match status" value="1"/>
</dbReference>
<dbReference type="HAMAP" id="MF_00115">
    <property type="entry name" value="MscL"/>
    <property type="match status" value="1"/>
</dbReference>
<dbReference type="InterPro" id="IPR019823">
    <property type="entry name" value="Mechanosensitive_channel_CS"/>
</dbReference>
<dbReference type="InterPro" id="IPR001185">
    <property type="entry name" value="MS_channel"/>
</dbReference>
<dbReference type="InterPro" id="IPR037673">
    <property type="entry name" value="MSC/AndL"/>
</dbReference>
<dbReference type="InterPro" id="IPR036019">
    <property type="entry name" value="MscL_channel"/>
</dbReference>
<dbReference type="NCBIfam" id="TIGR00220">
    <property type="entry name" value="mscL"/>
    <property type="match status" value="1"/>
</dbReference>
<dbReference type="NCBIfam" id="NF001843">
    <property type="entry name" value="PRK00567.1-4"/>
    <property type="match status" value="1"/>
</dbReference>
<dbReference type="NCBIfam" id="NF010558">
    <property type="entry name" value="PRK13953.1"/>
    <property type="match status" value="1"/>
</dbReference>
<dbReference type="NCBIfam" id="NF010560">
    <property type="entry name" value="PRK13955.1"/>
    <property type="match status" value="1"/>
</dbReference>
<dbReference type="PANTHER" id="PTHR30266:SF2">
    <property type="entry name" value="LARGE-CONDUCTANCE MECHANOSENSITIVE CHANNEL"/>
    <property type="match status" value="1"/>
</dbReference>
<dbReference type="PANTHER" id="PTHR30266">
    <property type="entry name" value="MECHANOSENSITIVE CHANNEL MSCL"/>
    <property type="match status" value="1"/>
</dbReference>
<dbReference type="Pfam" id="PF01741">
    <property type="entry name" value="MscL"/>
    <property type="match status" value="1"/>
</dbReference>
<dbReference type="PRINTS" id="PR01264">
    <property type="entry name" value="MECHCHANNEL"/>
</dbReference>
<dbReference type="SUPFAM" id="SSF81330">
    <property type="entry name" value="Gated mechanosensitive channel"/>
    <property type="match status" value="1"/>
</dbReference>
<dbReference type="PROSITE" id="PS01327">
    <property type="entry name" value="MSCL"/>
    <property type="match status" value="1"/>
</dbReference>
<feature type="chain" id="PRO_1000015380" description="Large-conductance mechanosensitive channel">
    <location>
        <begin position="1"/>
        <end position="131"/>
    </location>
</feature>
<feature type="transmembrane region" description="Helical" evidence="1">
    <location>
        <begin position="8"/>
        <end position="28"/>
    </location>
</feature>
<feature type="transmembrane region" description="Helical" evidence="1">
    <location>
        <begin position="30"/>
        <end position="50"/>
    </location>
</feature>
<feature type="transmembrane region" description="Helical" evidence="1">
    <location>
        <begin position="67"/>
        <end position="87"/>
    </location>
</feature>
<keyword id="KW-1003">Cell membrane</keyword>
<keyword id="KW-0407">Ion channel</keyword>
<keyword id="KW-0406">Ion transport</keyword>
<keyword id="KW-0472">Membrane</keyword>
<keyword id="KW-0812">Transmembrane</keyword>
<keyword id="KW-1133">Transmembrane helix</keyword>
<keyword id="KW-0813">Transport</keyword>
<sequence length="131" mass="14854">MWNEFKKFAIRGNVIDLAVGVIIGGAFGKIVSSLVNDIIMPLVGLLLGGIDFSNLSWKVGKAVVKYGAFIQTVVDFLIIAFSIFLFVKLINKLYERVKKQEEMEETEPTLTKEEELLTEIRDLLKQQRETM</sequence>
<reference key="1">
    <citation type="journal article" date="2007" name="Proc. Natl. Acad. Sci. U.S.A.">
        <title>Genome and proteome of long-chain alkane degrading Geobacillus thermodenitrificans NG80-2 isolated from a deep-subsurface oil reservoir.</title>
        <authorList>
            <person name="Feng L."/>
            <person name="Wang W."/>
            <person name="Cheng J."/>
            <person name="Ren Y."/>
            <person name="Zhao G."/>
            <person name="Gao C."/>
            <person name="Tang Y."/>
            <person name="Liu X."/>
            <person name="Han W."/>
            <person name="Peng X."/>
            <person name="Liu R."/>
            <person name="Wang L."/>
        </authorList>
    </citation>
    <scope>NUCLEOTIDE SEQUENCE [LARGE SCALE GENOMIC DNA]</scope>
    <source>
        <strain>NG80-2</strain>
    </source>
</reference>
<organism>
    <name type="scientific">Geobacillus thermodenitrificans (strain NG80-2)</name>
    <dbReference type="NCBI Taxonomy" id="420246"/>
    <lineage>
        <taxon>Bacteria</taxon>
        <taxon>Bacillati</taxon>
        <taxon>Bacillota</taxon>
        <taxon>Bacilli</taxon>
        <taxon>Bacillales</taxon>
        <taxon>Anoxybacillaceae</taxon>
        <taxon>Geobacillus</taxon>
    </lineage>
</organism>
<comment type="function">
    <text evidence="1">Channel that opens in response to stretch forces in the membrane lipid bilayer. May participate in the regulation of osmotic pressure changes within the cell.</text>
</comment>
<comment type="subunit">
    <text evidence="1">Homopentamer.</text>
</comment>
<comment type="subcellular location">
    <subcellularLocation>
        <location evidence="1">Cell membrane</location>
        <topology evidence="1">Multi-pass membrane protein</topology>
    </subcellularLocation>
</comment>
<comment type="similarity">
    <text evidence="1">Belongs to the MscL family.</text>
</comment>
<gene>
    <name evidence="1" type="primary">mscL</name>
    <name type="ordered locus">GTNG_1229</name>
</gene>
<protein>
    <recommendedName>
        <fullName evidence="1">Large-conductance mechanosensitive channel</fullName>
    </recommendedName>
</protein>
<proteinExistence type="inferred from homology"/>